<feature type="transit peptide" description="Mitochondrion" evidence="5">
    <location>
        <begin position="1"/>
        <end position="41"/>
    </location>
</feature>
<feature type="chain" id="PRO_0000001269" description="Alanine--glyoxylate aminotransferase 2, mitochondrial">
    <location>
        <begin position="42"/>
        <end position="514"/>
    </location>
</feature>
<feature type="modified residue" description="N6-acetyllysine; alternate" evidence="2">
    <location>
        <position position="71"/>
    </location>
</feature>
<feature type="modified residue" description="N6-succinyllysine; alternate" evidence="2">
    <location>
        <position position="71"/>
    </location>
</feature>
<feature type="modified residue" description="N6-acetyllysine" evidence="2">
    <location>
        <position position="84"/>
    </location>
</feature>
<feature type="modified residue" description="N6-acetyllysine; alternate" evidence="2">
    <location>
        <position position="262"/>
    </location>
</feature>
<feature type="modified residue" description="N6-succinyllysine; alternate" evidence="2">
    <location>
        <position position="262"/>
    </location>
</feature>
<feature type="modified residue" description="N6-succinyllysine" evidence="2">
    <location>
        <position position="304"/>
    </location>
</feature>
<feature type="modified residue" description="N6-(pyridoxal phosphate)lysine" evidence="1">
    <location>
        <position position="350"/>
    </location>
</feature>
<feature type="modified residue" description="N6-acetyllysine; alternate" evidence="2">
    <location>
        <position position="417"/>
    </location>
</feature>
<feature type="modified residue" description="N6-succinyllysine; alternate" evidence="2">
    <location>
        <position position="417"/>
    </location>
</feature>
<feature type="modified residue" description="N6-acetyllysine; alternate" evidence="2">
    <location>
        <position position="420"/>
    </location>
</feature>
<feature type="modified residue" description="N6-succinyllysine; alternate" evidence="2">
    <location>
        <position position="420"/>
    </location>
</feature>
<feature type="splice variant" id="VSP_055802" description="In isoform 2." evidence="12">
    <location>
        <begin position="321"/>
        <end position="395"/>
    </location>
</feature>
<feature type="sequence variant" id="VAR_061006" description="In dbSNP:rs37370.">
    <original>S</original>
    <variation>I</variation>
    <location>
        <position position="102"/>
    </location>
</feature>
<feature type="sequence variant" id="VAR_023483" description="In dbSNP:rs37370." evidence="4 10 11">
    <original>S</original>
    <variation>N</variation>
    <location>
        <position position="102"/>
    </location>
</feature>
<feature type="sequence variant" id="VAR_061007" description="In dbSNP:rs37370.">
    <original>S</original>
    <variation>T</variation>
    <location>
        <position position="102"/>
    </location>
</feature>
<feature type="sequence variant" id="VAR_048231" description="In dbSNP:rs16870794.">
    <original>G</original>
    <variation>R</variation>
    <location>
        <position position="132"/>
    </location>
</feature>
<feature type="sequence variant" id="VAR_022140" description="Correlates with higher urinary beta-aminoisobutyric acid concentrations; localized to the mitochondrion as the wild-type; reduces alanine-glyoxylate aminotransferase activity; dbSNP:rs37369." evidence="7 8 10 11">
    <original>V</original>
    <variation>I</variation>
    <location>
        <position position="140"/>
    </location>
</feature>
<feature type="sequence variant" id="VAR_022141" description="In dbSNP:rs180749." evidence="4 10 11">
    <original>T</original>
    <variation>I</variation>
    <location>
        <position position="212"/>
    </location>
</feature>
<feature type="sequence variant" id="VAR_048232" description="In dbSNP:rs17245714.">
    <original>P</original>
    <variation>R</variation>
    <location>
        <position position="492"/>
    </location>
</feature>
<feature type="sequence variant" id="VAR_029513" description="In dbSNP:rs16899974." evidence="7 11">
    <original>V</original>
    <variation>L</variation>
    <location>
        <position position="498"/>
    </location>
</feature>
<proteinExistence type="evidence at protein level"/>
<comment type="function">
    <text evidence="3 5 6 7">Multifunctional aminotransferase with a broad substrate specificity (PubMed:20018850, PubMed:23023372, PubMed:24586340). Catalyzes the conversion of glyoxylate to glycine using alanine as the amino donor (By similarity). Catalyzes metabolism of not L- but the D-isomer of D-beta-aminoisobutyric acid to generate 2-methyl-3-oxopropanoate and alanine (PubMed:24586340). Catalyzes the transfer of the amino group from beta-alanine to pyruvate to yield L-alanine and 3-oxopropanoate (By similarity). Can metabolize NG-monomethyl-L-arginine (NMMA), asymmetric NG,NG-dimethyl-L-arginine (ADMA) and symmetric NG,N'G-dimethyl-L-arginine (SDMA) (PubMed:20018850, PubMed:23023372). ADMA is a potent inhibitor of nitric-oxide (NO) synthase, and this activity provides mechanism through which the kidney regulates blood pressure (PubMed:20018850, PubMed:23023372).</text>
</comment>
<comment type="catalytic activity">
    <reaction evidence="3">
        <text>glyoxylate + L-alanine = glycine + pyruvate</text>
        <dbReference type="Rhea" id="RHEA:24248"/>
        <dbReference type="ChEBI" id="CHEBI:15361"/>
        <dbReference type="ChEBI" id="CHEBI:36655"/>
        <dbReference type="ChEBI" id="CHEBI:57305"/>
        <dbReference type="ChEBI" id="CHEBI:57972"/>
        <dbReference type="EC" id="2.6.1.44"/>
    </reaction>
    <physiologicalReaction direction="left-to-right" evidence="14">
        <dbReference type="Rhea" id="RHEA:24249"/>
    </physiologicalReaction>
</comment>
<comment type="catalytic activity">
    <reaction evidence="7">
        <text>(R)-3-amino-2-methylpropanoate + pyruvate = 2-methyl-3-oxopropanoate + L-alanine</text>
        <dbReference type="Rhea" id="RHEA:18393"/>
        <dbReference type="ChEBI" id="CHEBI:15361"/>
        <dbReference type="ChEBI" id="CHEBI:57700"/>
        <dbReference type="ChEBI" id="CHEBI:57731"/>
        <dbReference type="ChEBI" id="CHEBI:57972"/>
        <dbReference type="EC" id="2.6.1.40"/>
    </reaction>
    <physiologicalReaction direction="left-to-right" evidence="15">
        <dbReference type="Rhea" id="RHEA:18394"/>
    </physiologicalReaction>
</comment>
<comment type="catalytic activity">
    <reaction evidence="3">
        <text>3-oxopropanoate + L-alanine = beta-alanine + pyruvate</text>
        <dbReference type="Rhea" id="RHEA:14077"/>
        <dbReference type="ChEBI" id="CHEBI:15361"/>
        <dbReference type="ChEBI" id="CHEBI:33190"/>
        <dbReference type="ChEBI" id="CHEBI:57966"/>
        <dbReference type="ChEBI" id="CHEBI:57972"/>
        <dbReference type="EC" id="2.6.1.18"/>
    </reaction>
    <physiologicalReaction direction="right-to-left" evidence="3">
        <dbReference type="Rhea" id="RHEA:14079"/>
    </physiologicalReaction>
</comment>
<comment type="catalytic activity">
    <reaction evidence="3">
        <text>2-oxobutanoate + L-alanine = (2S)-2-aminobutanoate + pyruvate</text>
        <dbReference type="Rhea" id="RHEA:77355"/>
        <dbReference type="ChEBI" id="CHEBI:15361"/>
        <dbReference type="ChEBI" id="CHEBI:16763"/>
        <dbReference type="ChEBI" id="CHEBI:57972"/>
        <dbReference type="ChEBI" id="CHEBI:74359"/>
        <dbReference type="EC" id="2.6.1.44"/>
    </reaction>
</comment>
<comment type="catalytic activity">
    <reaction evidence="6">
        <text>N(omega),N(omega)-dimethyl-L-arginine + pyruvate = 5-(3,3-dimethylguanidino)-2-oxopentanoate + L-alanine</text>
        <dbReference type="Rhea" id="RHEA:77303"/>
        <dbReference type="ChEBI" id="CHEBI:15361"/>
        <dbReference type="ChEBI" id="CHEBI:57972"/>
        <dbReference type="ChEBI" id="CHEBI:58326"/>
        <dbReference type="ChEBI" id="CHEBI:197301"/>
    </reaction>
</comment>
<comment type="catalytic activity">
    <reaction evidence="3">
        <text>N(omega),N('omega)-dimethyl-L-arginine + pyruvate = 5-(3,3'-dimethylguanidino)-2-oxopentanoate + L-alanine</text>
        <dbReference type="Rhea" id="RHEA:77307"/>
        <dbReference type="ChEBI" id="CHEBI:15361"/>
        <dbReference type="ChEBI" id="CHEBI:57972"/>
        <dbReference type="ChEBI" id="CHEBI:197308"/>
        <dbReference type="ChEBI" id="CHEBI:197310"/>
    </reaction>
</comment>
<comment type="catalytic activity">
    <reaction evidence="3">
        <text>N(omega),N(omega)-dimethyl-L-arginine + glyoxylate = 5-(3,3-dimethylguanidino)-2-oxopentanoate + glycine</text>
        <dbReference type="Rhea" id="RHEA:77311"/>
        <dbReference type="ChEBI" id="CHEBI:36655"/>
        <dbReference type="ChEBI" id="CHEBI:57305"/>
        <dbReference type="ChEBI" id="CHEBI:58326"/>
        <dbReference type="ChEBI" id="CHEBI:197301"/>
    </reaction>
</comment>
<comment type="catalytic activity">
    <reaction evidence="3">
        <text>N(omega),N('omega)-dimethyl-L-arginine + glyoxylate = 5-(3,3'-dimethylguanidino)-2-oxopentanoate + glycine</text>
        <dbReference type="Rhea" id="RHEA:77315"/>
        <dbReference type="ChEBI" id="CHEBI:36655"/>
        <dbReference type="ChEBI" id="CHEBI:57305"/>
        <dbReference type="ChEBI" id="CHEBI:197308"/>
        <dbReference type="ChEBI" id="CHEBI:197310"/>
    </reaction>
</comment>
<comment type="catalytic activity">
    <reaction evidence="3">
        <text>N(omega)-methyl-L-arginine + pyruvate = 5-(3-methylguanidino)-2-oxopentanoate + L-alanine</text>
        <dbReference type="Rhea" id="RHEA:77319"/>
        <dbReference type="ChEBI" id="CHEBI:15361"/>
        <dbReference type="ChEBI" id="CHEBI:57972"/>
        <dbReference type="ChEBI" id="CHEBI:114953"/>
        <dbReference type="ChEBI" id="CHEBI:197314"/>
    </reaction>
</comment>
<comment type="catalytic activity">
    <reaction evidence="3">
        <text>N(omega)-methyl-L-arginine + glyoxylate = 5-(3-methylguanidino)-2-oxopentanoate + glycine</text>
        <dbReference type="Rhea" id="RHEA:77323"/>
        <dbReference type="ChEBI" id="CHEBI:36655"/>
        <dbReference type="ChEBI" id="CHEBI:57305"/>
        <dbReference type="ChEBI" id="CHEBI:114953"/>
        <dbReference type="ChEBI" id="CHEBI:197314"/>
    </reaction>
</comment>
<comment type="catalytic activity">
    <reaction evidence="3">
        <text>L-ornithine + pyruvate = 5-amino-2-oxopentanoate + L-alanine</text>
        <dbReference type="Rhea" id="RHEA:77327"/>
        <dbReference type="ChEBI" id="CHEBI:15361"/>
        <dbReference type="ChEBI" id="CHEBI:46911"/>
        <dbReference type="ChEBI" id="CHEBI:57972"/>
        <dbReference type="ChEBI" id="CHEBI:58802"/>
    </reaction>
</comment>
<comment type="catalytic activity">
    <reaction evidence="3">
        <text>L-ornithine + glyoxylate = 5-amino-2-oxopentanoate + glycine</text>
        <dbReference type="Rhea" id="RHEA:77331"/>
        <dbReference type="ChEBI" id="CHEBI:36655"/>
        <dbReference type="ChEBI" id="CHEBI:46911"/>
        <dbReference type="ChEBI" id="CHEBI:57305"/>
        <dbReference type="ChEBI" id="CHEBI:58802"/>
    </reaction>
</comment>
<comment type="catalytic activity">
    <reaction evidence="3">
        <text>(2S)-2-aminobutanoate + glyoxylate = 2-oxobutanoate + glycine</text>
        <dbReference type="Rhea" id="RHEA:77339"/>
        <dbReference type="ChEBI" id="CHEBI:16763"/>
        <dbReference type="ChEBI" id="CHEBI:36655"/>
        <dbReference type="ChEBI" id="CHEBI:57305"/>
        <dbReference type="ChEBI" id="CHEBI:74359"/>
    </reaction>
</comment>
<comment type="catalytic activity">
    <reaction evidence="3">
        <text>N(omega),N(omega)-dimethyl-L-arginine + oxaloacetate = 5-(3,3-dimethylguanidino)-2-oxopentanoate + L-aspartate</text>
        <dbReference type="Rhea" id="RHEA:77343"/>
        <dbReference type="ChEBI" id="CHEBI:16452"/>
        <dbReference type="ChEBI" id="CHEBI:29991"/>
        <dbReference type="ChEBI" id="CHEBI:58326"/>
        <dbReference type="ChEBI" id="CHEBI:197301"/>
    </reaction>
</comment>
<comment type="catalytic activity">
    <reaction evidence="3">
        <text>oxaloacetate + L-alanine = L-aspartate + pyruvate</text>
        <dbReference type="Rhea" id="RHEA:77347"/>
        <dbReference type="ChEBI" id="CHEBI:15361"/>
        <dbReference type="ChEBI" id="CHEBI:16452"/>
        <dbReference type="ChEBI" id="CHEBI:29991"/>
        <dbReference type="ChEBI" id="CHEBI:57972"/>
    </reaction>
</comment>
<comment type="catalytic activity">
    <reaction evidence="3">
        <text>N(omega),N(omega)-dimethyl-L-arginine + 2-oxobutanoate = 5-(3,3-dimethylguanidino)-2-oxopentanoate + (2S)-2-aminobutanoate</text>
        <dbReference type="Rhea" id="RHEA:77351"/>
        <dbReference type="ChEBI" id="CHEBI:16763"/>
        <dbReference type="ChEBI" id="CHEBI:58326"/>
        <dbReference type="ChEBI" id="CHEBI:74359"/>
        <dbReference type="ChEBI" id="CHEBI:197301"/>
    </reaction>
</comment>
<comment type="catalytic activity">
    <reaction evidence="3">
        <text>2-oxopentanoate + N(omega),N(omega)-dimethyl-L-arginine = 5-(3,3-dimethylguanidino)-2-oxopentanoate + L-2-aminopentanoate</text>
        <dbReference type="Rhea" id="RHEA:77359"/>
        <dbReference type="ChEBI" id="CHEBI:28644"/>
        <dbReference type="ChEBI" id="CHEBI:58326"/>
        <dbReference type="ChEBI" id="CHEBI:58441"/>
        <dbReference type="ChEBI" id="CHEBI:197301"/>
    </reaction>
</comment>
<comment type="catalytic activity">
    <reaction evidence="3">
        <text>2-oxohexanoate + N(omega),N(omega)-dimethyl-L-arginine = L-2-aminohexanoate + 5-(3,3-dimethylguanidino)-2-oxopentanoate</text>
        <dbReference type="Rhea" id="RHEA:77363"/>
        <dbReference type="ChEBI" id="CHEBI:35177"/>
        <dbReference type="ChEBI" id="CHEBI:58326"/>
        <dbReference type="ChEBI" id="CHEBI:58455"/>
        <dbReference type="ChEBI" id="CHEBI:197301"/>
    </reaction>
</comment>
<comment type="cofactor">
    <cofactor evidence="3">
        <name>pyridoxal 5'-phosphate</name>
        <dbReference type="ChEBI" id="CHEBI:597326"/>
    </cofactor>
</comment>
<comment type="subunit">
    <text evidence="3">Homotetramer.</text>
</comment>
<comment type="subcellular location">
    <subcellularLocation>
        <location evidence="5 7 9">Mitochondrion</location>
    </subcellularLocation>
</comment>
<comment type="alternative products">
    <event type="alternative splicing"/>
    <isoform>
        <id>Q9BYV1-1</id>
        <name>1</name>
        <sequence type="displayed"/>
    </isoform>
    <isoform>
        <id>Q9BYV1-2</id>
        <name>2</name>
        <sequence type="described" ref="VSP_055802"/>
    </isoform>
</comment>
<comment type="tissue specificity">
    <text evidence="9">Expressed in the convoluted tubule in the kidney and in the liver hepatocytes (at protein level).</text>
</comment>
<comment type="polymorphism">
    <text evidence="7">Genetic variants in AGXT2 are association with beta-aminoisobutyric aciduria (BAIBA)[MIM:210100]. Excretion of beta-aminoisobutyric acid in urine is a common, benign, metabolic trait.</text>
</comment>
<comment type="similarity">
    <text evidence="13">Belongs to the class-III pyridoxal-phosphate-dependent aminotransferase family.</text>
</comment>
<gene>
    <name type="primary">AGXT2</name>
    <name type="synonym">AGT2</name>
</gene>
<keyword id="KW-0007">Acetylation</keyword>
<keyword id="KW-0025">Alternative splicing</keyword>
<keyword id="KW-0032">Aminotransferase</keyword>
<keyword id="KW-0903">Direct protein sequencing</keyword>
<keyword id="KW-0496">Mitochondrion</keyword>
<keyword id="KW-1267">Proteomics identification</keyword>
<keyword id="KW-0663">Pyridoxal phosphate</keyword>
<keyword id="KW-1185">Reference proteome</keyword>
<keyword id="KW-0808">Transferase</keyword>
<keyword id="KW-0809">Transit peptide</keyword>
<evidence type="ECO:0000250" key="1"/>
<evidence type="ECO:0000250" key="2">
    <source>
        <dbReference type="UniProtKB" id="Q3UEG6"/>
    </source>
</evidence>
<evidence type="ECO:0000250" key="3">
    <source>
        <dbReference type="UniProtKB" id="Q64565"/>
    </source>
</evidence>
<evidence type="ECO:0000269" key="4">
    <source>
    </source>
</evidence>
<evidence type="ECO:0000269" key="5">
    <source>
    </source>
</evidence>
<evidence type="ECO:0000269" key="6">
    <source>
    </source>
</evidence>
<evidence type="ECO:0000269" key="7">
    <source>
    </source>
</evidence>
<evidence type="ECO:0000269" key="8">
    <source>
    </source>
</evidence>
<evidence type="ECO:0000269" key="9">
    <source>
    </source>
</evidence>
<evidence type="ECO:0000269" key="10">
    <source ref="2"/>
</evidence>
<evidence type="ECO:0000269" key="11">
    <source ref="3"/>
</evidence>
<evidence type="ECO:0000303" key="12">
    <source>
    </source>
</evidence>
<evidence type="ECO:0000305" key="13"/>
<evidence type="ECO:0000305" key="14">
    <source>
    </source>
</evidence>
<evidence type="ECO:0000305" key="15">
    <source>
    </source>
</evidence>
<sequence length="514" mass="57156">MTLIWRHLLRPLCLVTSAPRILEMHPFLSLGTSRTSVTKLSLHTKPRMPPCDFMPERYQSLGYNRVLEIHKEHLSPVVTAYFQKPLLLHQGHMEWLFDAEGSRYLDFFSGIVTVSVGHCHPKVNAVAQKQLGRLWHTSTVFFHPPMHEYAEKLAALLPEPLKVIFLVNSGSEANELAMLMARAHSNNIDIISFRGAYHGCSPYTLGLTNVGTYKMELPGGTGCQPTMCPDVFRGPWGGSHCRDSPVQTIRKCSCAPDCCQAKDQYIEQFKDTLSTSVAKSIAGFFAEPIQGVNGVVQYPKGFLKEAFELVRARGGVCIADEVQTGFGRLGSHFWGFQTHDVLPDIVTMAKGIGNGFPMAAVITTPEIAKSLAKCLQHFNTFGGNPMACAIGSAVLEVIKEENLQENSQEVGTYMLLKFAKLRDEFEIVGDVRGKGLMIGIEMVQDKISCRPLPREEVNQIHEDCKHMGLLVGRGSIFSQTFRIAPSMCITKPEVDFAVEVFRSALTQHMERRAK</sequence>
<organism>
    <name type="scientific">Homo sapiens</name>
    <name type="common">Human</name>
    <dbReference type="NCBI Taxonomy" id="9606"/>
    <lineage>
        <taxon>Eukaryota</taxon>
        <taxon>Metazoa</taxon>
        <taxon>Chordata</taxon>
        <taxon>Craniata</taxon>
        <taxon>Vertebrata</taxon>
        <taxon>Euteleostomi</taxon>
        <taxon>Mammalia</taxon>
        <taxon>Eutheria</taxon>
        <taxon>Euarchontoglires</taxon>
        <taxon>Primates</taxon>
        <taxon>Haplorrhini</taxon>
        <taxon>Catarrhini</taxon>
        <taxon>Hominidae</taxon>
        <taxon>Homo</taxon>
    </lineage>
</organism>
<dbReference type="EC" id="2.6.1.44" evidence="3"/>
<dbReference type="EC" id="2.6.1.40" evidence="7"/>
<dbReference type="EC" id="2.6.1.18" evidence="3"/>
<dbReference type="EMBL" id="AJ292204">
    <property type="protein sequence ID" value="CAC24841.1"/>
    <property type="molecule type" value="mRNA"/>
</dbReference>
<dbReference type="EMBL" id="AB193309">
    <property type="protein sequence ID" value="BAD66662.1"/>
    <property type="molecule type" value="mRNA"/>
</dbReference>
<dbReference type="EMBL" id="AK223128">
    <property type="protein sequence ID" value="BAD96848.1"/>
    <property type="molecule type" value="mRNA"/>
</dbReference>
<dbReference type="EMBL" id="AK223144">
    <property type="status" value="NOT_ANNOTATED_CDS"/>
    <property type="molecule type" value="mRNA"/>
</dbReference>
<dbReference type="EMBL" id="AK223375">
    <property type="protein sequence ID" value="BAD97095.1"/>
    <property type="molecule type" value="mRNA"/>
</dbReference>
<dbReference type="EMBL" id="AC010368">
    <property type="status" value="NOT_ANNOTATED_CDS"/>
    <property type="molecule type" value="Genomic_DNA"/>
</dbReference>
<dbReference type="EMBL" id="BC144268">
    <property type="protein sequence ID" value="AAI44269.1"/>
    <property type="molecule type" value="mRNA"/>
</dbReference>
<dbReference type="EMBL" id="BC150603">
    <property type="protein sequence ID" value="AAI50604.1"/>
    <property type="molecule type" value="mRNA"/>
</dbReference>
<dbReference type="CCDS" id="CCDS3908.1">
    <molecule id="Q9BYV1-1"/>
</dbReference>
<dbReference type="CCDS" id="CCDS78000.1">
    <molecule id="Q9BYV1-2"/>
</dbReference>
<dbReference type="RefSeq" id="NP_001293102.1">
    <molecule id="Q9BYV1-2"/>
    <property type="nucleotide sequence ID" value="NM_001306173.2"/>
</dbReference>
<dbReference type="RefSeq" id="NP_114106.1">
    <molecule id="Q9BYV1-1"/>
    <property type="nucleotide sequence ID" value="NM_031900.4"/>
</dbReference>
<dbReference type="RefSeq" id="XP_016865237.1">
    <molecule id="Q9BYV1-2"/>
    <property type="nucleotide sequence ID" value="XM_017009748.3"/>
</dbReference>
<dbReference type="SMR" id="Q9BYV1"/>
<dbReference type="BioGRID" id="122342">
    <property type="interactions" value="59"/>
</dbReference>
<dbReference type="FunCoup" id="Q9BYV1">
    <property type="interactions" value="277"/>
</dbReference>
<dbReference type="IntAct" id="Q9BYV1">
    <property type="interactions" value="3"/>
</dbReference>
<dbReference type="STRING" id="9606.ENSP00000231420"/>
<dbReference type="DrugBank" id="DB00160">
    <property type="generic name" value="Alanine"/>
</dbReference>
<dbReference type="DrugBank" id="DB00145">
    <property type="generic name" value="Glycine"/>
</dbReference>
<dbReference type="DrugBank" id="DB00114">
    <property type="generic name" value="Pyridoxal phosphate"/>
</dbReference>
<dbReference type="DrugBank" id="DB00119">
    <property type="generic name" value="Pyruvic acid"/>
</dbReference>
<dbReference type="iPTMnet" id="Q9BYV1"/>
<dbReference type="PhosphoSitePlus" id="Q9BYV1"/>
<dbReference type="BioMuta" id="AGXT2"/>
<dbReference type="DMDM" id="17432913"/>
<dbReference type="jPOST" id="Q9BYV1"/>
<dbReference type="MassIVE" id="Q9BYV1"/>
<dbReference type="PaxDb" id="9606-ENSP00000231420"/>
<dbReference type="PeptideAtlas" id="Q9BYV1"/>
<dbReference type="ProteomicsDB" id="19698"/>
<dbReference type="ProteomicsDB" id="79711">
    <molecule id="Q9BYV1-1"/>
</dbReference>
<dbReference type="Antibodypedia" id="43482">
    <property type="antibodies" value="145 antibodies from 26 providers"/>
</dbReference>
<dbReference type="DNASU" id="64902"/>
<dbReference type="Ensembl" id="ENST00000231420.11">
    <molecule id="Q9BYV1-1"/>
    <property type="protein sequence ID" value="ENSP00000231420.6"/>
    <property type="gene ID" value="ENSG00000113492.14"/>
</dbReference>
<dbReference type="Ensembl" id="ENST00000510428.1">
    <molecule id="Q9BYV1-2"/>
    <property type="protein sequence ID" value="ENSP00000422799.1"/>
    <property type="gene ID" value="ENSG00000113492.14"/>
</dbReference>
<dbReference type="Ensembl" id="ENST00000618015.4">
    <molecule id="Q9BYV1-2"/>
    <property type="protein sequence ID" value="ENSP00000479154.1"/>
    <property type="gene ID" value="ENSG00000113492.14"/>
</dbReference>
<dbReference type="GeneID" id="64902"/>
<dbReference type="KEGG" id="hsa:64902"/>
<dbReference type="MANE-Select" id="ENST00000231420.11">
    <property type="protein sequence ID" value="ENSP00000231420.6"/>
    <property type="RefSeq nucleotide sequence ID" value="NM_031900.4"/>
    <property type="RefSeq protein sequence ID" value="NP_114106.1"/>
</dbReference>
<dbReference type="UCSC" id="uc003jjf.4">
    <molecule id="Q9BYV1-1"/>
    <property type="organism name" value="human"/>
</dbReference>
<dbReference type="AGR" id="HGNC:14412"/>
<dbReference type="CTD" id="64902"/>
<dbReference type="DisGeNET" id="64902"/>
<dbReference type="GeneCards" id="AGXT2"/>
<dbReference type="HGNC" id="HGNC:14412">
    <property type="gene designation" value="AGXT2"/>
</dbReference>
<dbReference type="HPA" id="ENSG00000113492">
    <property type="expression patterns" value="Group enriched (kidney, liver)"/>
</dbReference>
<dbReference type="MalaCards" id="AGXT2"/>
<dbReference type="MIM" id="210100">
    <property type="type" value="phenotype"/>
</dbReference>
<dbReference type="MIM" id="612471">
    <property type="type" value="gene"/>
</dbReference>
<dbReference type="neXtProt" id="NX_Q9BYV1"/>
<dbReference type="OpenTargets" id="ENSG00000113492"/>
<dbReference type="PharmGKB" id="PA24634"/>
<dbReference type="VEuPathDB" id="HostDB:ENSG00000113492"/>
<dbReference type="eggNOG" id="KOG1404">
    <property type="taxonomic scope" value="Eukaryota"/>
</dbReference>
<dbReference type="GeneTree" id="ENSGT00940000156125"/>
<dbReference type="HOGENOM" id="CLU_016922_8_0_1"/>
<dbReference type="InParanoid" id="Q9BYV1"/>
<dbReference type="OMA" id="MVPGFKY"/>
<dbReference type="OrthoDB" id="10261433at2759"/>
<dbReference type="PAN-GO" id="Q9BYV1">
    <property type="GO annotations" value="4 GO annotations based on evolutionary models"/>
</dbReference>
<dbReference type="PhylomeDB" id="Q9BYV1"/>
<dbReference type="TreeFam" id="TF105945"/>
<dbReference type="BioCyc" id="MetaCyc:HS03685-MONOMER"/>
<dbReference type="BRENDA" id="2.6.1.44">
    <property type="organism ID" value="2681"/>
</dbReference>
<dbReference type="PathwayCommons" id="Q9BYV1"/>
<dbReference type="Reactome" id="R-HSA-389661">
    <property type="pathway name" value="Glyoxylate metabolism and glycine degradation"/>
</dbReference>
<dbReference type="Reactome" id="R-HSA-73621">
    <property type="pathway name" value="Pyrimidine catabolism"/>
</dbReference>
<dbReference type="SignaLink" id="Q9BYV1"/>
<dbReference type="BioGRID-ORCS" id="64902">
    <property type="hits" value="8 hits in 1153 CRISPR screens"/>
</dbReference>
<dbReference type="ChiTaRS" id="AGXT2">
    <property type="organism name" value="human"/>
</dbReference>
<dbReference type="GenomeRNAi" id="64902"/>
<dbReference type="Pharos" id="Q9BYV1">
    <property type="development level" value="Tbio"/>
</dbReference>
<dbReference type="PRO" id="PR:Q9BYV1"/>
<dbReference type="Proteomes" id="UP000005640">
    <property type="component" value="Chromosome 5"/>
</dbReference>
<dbReference type="RNAct" id="Q9BYV1">
    <property type="molecule type" value="protein"/>
</dbReference>
<dbReference type="Bgee" id="ENSG00000113492">
    <property type="expression patterns" value="Expressed in kidney epithelium and 41 other cell types or tissues"/>
</dbReference>
<dbReference type="GO" id="GO:0005759">
    <property type="term" value="C:mitochondrial matrix"/>
    <property type="evidence" value="ECO:0000304"/>
    <property type="project" value="Reactome"/>
</dbReference>
<dbReference type="GO" id="GO:0005739">
    <property type="term" value="C:mitochondrion"/>
    <property type="evidence" value="ECO:0000314"/>
    <property type="project" value="UniProtKB"/>
</dbReference>
<dbReference type="GO" id="GO:0047305">
    <property type="term" value="F:(R)-3-amino-2-methylpropionate-pyruvate transaminase activity"/>
    <property type="evidence" value="ECO:0000314"/>
    <property type="project" value="UniProtKB"/>
</dbReference>
<dbReference type="GO" id="GO:0008453">
    <property type="term" value="F:alanine-glyoxylate transaminase activity"/>
    <property type="evidence" value="ECO:0000314"/>
    <property type="project" value="UniProtKB"/>
</dbReference>
<dbReference type="GO" id="GO:0016223">
    <property type="term" value="F:beta-alanine:pyruvate transaminase activity"/>
    <property type="evidence" value="ECO:0007669"/>
    <property type="project" value="Ensembl"/>
</dbReference>
<dbReference type="GO" id="GO:0030170">
    <property type="term" value="F:pyridoxal phosphate binding"/>
    <property type="evidence" value="ECO:0007669"/>
    <property type="project" value="InterPro"/>
</dbReference>
<dbReference type="GO" id="GO:0019265">
    <property type="term" value="P:glycine biosynthetic process, by transamination of glyoxylate"/>
    <property type="evidence" value="ECO:0000314"/>
    <property type="project" value="BHF-UCL"/>
</dbReference>
<dbReference type="GO" id="GO:0009436">
    <property type="term" value="P:glyoxylate catabolic process"/>
    <property type="evidence" value="ECO:0000314"/>
    <property type="project" value="BHF-UCL"/>
</dbReference>
<dbReference type="GO" id="GO:0019481">
    <property type="term" value="P:L-alanine catabolic process, by transamination"/>
    <property type="evidence" value="ECO:0000314"/>
    <property type="project" value="BHF-UCL"/>
</dbReference>
<dbReference type="GO" id="GO:2001299">
    <property type="term" value="P:N(omega),N(omega)-dimethyl-L-arginine catabolic process"/>
    <property type="evidence" value="ECO:0000250"/>
    <property type="project" value="UniProtKB"/>
</dbReference>
<dbReference type="GO" id="GO:0045429">
    <property type="term" value="P:positive regulation of nitric oxide biosynthetic process"/>
    <property type="evidence" value="ECO:0000314"/>
    <property type="project" value="BHF-UCL"/>
</dbReference>
<dbReference type="CDD" id="cd00610">
    <property type="entry name" value="OAT_like"/>
    <property type="match status" value="1"/>
</dbReference>
<dbReference type="FunFam" id="3.40.640.10:FF:000055">
    <property type="entry name" value="Alanine--glyoxylate aminotransferase 2, mitochondrial"/>
    <property type="match status" value="1"/>
</dbReference>
<dbReference type="FunFam" id="3.90.1150.10:FF:000105">
    <property type="entry name" value="alanine--glyoxylate aminotransferase 2, mitochondrial isoform X3"/>
    <property type="match status" value="1"/>
</dbReference>
<dbReference type="Gene3D" id="3.90.1150.10">
    <property type="entry name" value="Aspartate Aminotransferase, domain 1"/>
    <property type="match status" value="1"/>
</dbReference>
<dbReference type="Gene3D" id="3.40.640.10">
    <property type="entry name" value="Type I PLP-dependent aspartate aminotransferase-like (Major domain)"/>
    <property type="match status" value="1"/>
</dbReference>
<dbReference type="InterPro" id="IPR005814">
    <property type="entry name" value="Aminotrans_3"/>
</dbReference>
<dbReference type="InterPro" id="IPR049704">
    <property type="entry name" value="Aminotrans_3_PPA_site"/>
</dbReference>
<dbReference type="InterPro" id="IPR015424">
    <property type="entry name" value="PyrdxlP-dep_Trfase"/>
</dbReference>
<dbReference type="InterPro" id="IPR015421">
    <property type="entry name" value="PyrdxlP-dep_Trfase_major"/>
</dbReference>
<dbReference type="InterPro" id="IPR015422">
    <property type="entry name" value="PyrdxlP-dep_Trfase_small"/>
</dbReference>
<dbReference type="PANTHER" id="PTHR45688">
    <property type="match status" value="1"/>
</dbReference>
<dbReference type="PANTHER" id="PTHR45688:SF3">
    <property type="entry name" value="ALANINE--GLYOXYLATE AMINOTRANSFERASE 2, MITOCHONDRIAL"/>
    <property type="match status" value="1"/>
</dbReference>
<dbReference type="Pfam" id="PF00202">
    <property type="entry name" value="Aminotran_3"/>
    <property type="match status" value="1"/>
</dbReference>
<dbReference type="PIRSF" id="PIRSF000521">
    <property type="entry name" value="Transaminase_4ab_Lys_Orn"/>
    <property type="match status" value="1"/>
</dbReference>
<dbReference type="SUPFAM" id="SSF53383">
    <property type="entry name" value="PLP-dependent transferases"/>
    <property type="match status" value="1"/>
</dbReference>
<dbReference type="PROSITE" id="PS00600">
    <property type="entry name" value="AA_TRANSFER_CLASS_3"/>
    <property type="match status" value="1"/>
</dbReference>
<accession>Q9BYV1</accession>
<accession>B7ZM47</accession>
<accession>E9PDL7</accession>
<accession>Q53FB4</accession>
<accession>Q53FY7</accession>
<accession>Q53G03</accession>
<accession>Q5W7Q1</accession>
<name>AGT2_HUMAN</name>
<reference key="1">
    <citation type="submission" date="2001-01" db="EMBL/GenBank/DDBJ databases">
        <title>The human ortholog for rat alanine-glyoxylate aminotransferase 2.</title>
        <authorList>
            <person name="Jenne D.E."/>
        </authorList>
    </citation>
    <scope>NUCLEOTIDE SEQUENCE [MRNA] (ISOFORM 1)</scope>
</reference>
<reference key="2">
    <citation type="submission" date="2004-10" db="EMBL/GenBank/DDBJ databases">
        <title>Human beta-alanine-pyruvate aminotransferase cDNA.</title>
        <authorList>
            <person name="Matsuda K."/>
            <person name="Horikawa Y."/>
            <person name="Kaneko M."/>
            <person name="Sakata S."/>
            <person name="Tamaki N."/>
        </authorList>
    </citation>
    <scope>NUCLEOTIDE SEQUENCE [MRNA] (ISOFORM 1)</scope>
    <scope>VARIANTS ASN-102; ILE-140 AND ILE-212</scope>
</reference>
<reference key="3">
    <citation type="submission" date="2005-04" db="EMBL/GenBank/DDBJ databases">
        <authorList>
            <person name="Suzuki Y."/>
            <person name="Sugano S."/>
            <person name="Totoki Y."/>
            <person name="Toyoda A."/>
            <person name="Takeda T."/>
            <person name="Sakaki Y."/>
            <person name="Tanaka A."/>
            <person name="Yokoyama S."/>
        </authorList>
    </citation>
    <scope>NUCLEOTIDE SEQUENCE [LARGE SCALE MRNA] (ISOFORM 1)</scope>
    <scope>VARIANTS ASN-102; ILE-140; ILE-212 AND LEU-498</scope>
    <source>
        <tissue>Kidney</tissue>
    </source>
</reference>
<reference key="4">
    <citation type="journal article" date="2004" name="Nature">
        <title>The DNA sequence and comparative analysis of human chromosome 5.</title>
        <authorList>
            <person name="Schmutz J."/>
            <person name="Martin J."/>
            <person name="Terry A."/>
            <person name="Couronne O."/>
            <person name="Grimwood J."/>
            <person name="Lowry S."/>
            <person name="Gordon L.A."/>
            <person name="Scott D."/>
            <person name="Xie G."/>
            <person name="Huang W."/>
            <person name="Hellsten U."/>
            <person name="Tran-Gyamfi M."/>
            <person name="She X."/>
            <person name="Prabhakar S."/>
            <person name="Aerts A."/>
            <person name="Altherr M."/>
            <person name="Bajorek E."/>
            <person name="Black S."/>
            <person name="Branscomb E."/>
            <person name="Caoile C."/>
            <person name="Challacombe J.F."/>
            <person name="Chan Y.M."/>
            <person name="Denys M."/>
            <person name="Detter J.C."/>
            <person name="Escobar J."/>
            <person name="Flowers D."/>
            <person name="Fotopulos D."/>
            <person name="Glavina T."/>
            <person name="Gomez M."/>
            <person name="Gonzales E."/>
            <person name="Goodstein D."/>
            <person name="Grigoriev I."/>
            <person name="Groza M."/>
            <person name="Hammon N."/>
            <person name="Hawkins T."/>
            <person name="Haydu L."/>
            <person name="Israni S."/>
            <person name="Jett J."/>
            <person name="Kadner K."/>
            <person name="Kimball H."/>
            <person name="Kobayashi A."/>
            <person name="Lopez F."/>
            <person name="Lou Y."/>
            <person name="Martinez D."/>
            <person name="Medina C."/>
            <person name="Morgan J."/>
            <person name="Nandkeshwar R."/>
            <person name="Noonan J.P."/>
            <person name="Pitluck S."/>
            <person name="Pollard M."/>
            <person name="Predki P."/>
            <person name="Priest J."/>
            <person name="Ramirez L."/>
            <person name="Retterer J."/>
            <person name="Rodriguez A."/>
            <person name="Rogers S."/>
            <person name="Salamov A."/>
            <person name="Salazar A."/>
            <person name="Thayer N."/>
            <person name="Tice H."/>
            <person name="Tsai M."/>
            <person name="Ustaszewska A."/>
            <person name="Vo N."/>
            <person name="Wheeler J."/>
            <person name="Wu K."/>
            <person name="Yang J."/>
            <person name="Dickson M."/>
            <person name="Cheng J.-F."/>
            <person name="Eichler E.E."/>
            <person name="Olsen A."/>
            <person name="Pennacchio L.A."/>
            <person name="Rokhsar D.S."/>
            <person name="Richardson P."/>
            <person name="Lucas S.M."/>
            <person name="Myers R.M."/>
            <person name="Rubin E.M."/>
        </authorList>
    </citation>
    <scope>NUCLEOTIDE SEQUENCE [LARGE SCALE GENOMIC DNA]</scope>
</reference>
<reference key="5">
    <citation type="journal article" date="2004" name="Genome Res.">
        <title>The status, quality, and expansion of the NIH full-length cDNA project: the Mammalian Gene Collection (MGC).</title>
        <authorList>
            <consortium name="The MGC Project Team"/>
        </authorList>
    </citation>
    <scope>NUCLEOTIDE SEQUENCE [LARGE SCALE MRNA] (ISOFORM 2)</scope>
    <scope>VARIANTS ASN-102 AND ILE-212</scope>
    <source>
        <tissue>Testis</tissue>
    </source>
</reference>
<reference key="6">
    <citation type="journal article" date="2010" name="J. Biol. Chem.">
        <title>Human alanine-glyoxylate aminotransferase 2 lowers asymmetric dimethylarginine and protects from inhibition of nitric oxide production.</title>
        <authorList>
            <person name="Rodionov R.N."/>
            <person name="Murry D.J."/>
            <person name="Vaulman S.F."/>
            <person name="Stevens J.W."/>
            <person name="Lentz S.R."/>
        </authorList>
    </citation>
    <scope>PROTEIN SEQUENCE OF N-TERMINUS</scope>
    <scope>FUNCTION</scope>
    <scope>TRANSIT PEPTIDE CLEAVAGE SITE</scope>
    <scope>SUBCELLULAR LOCATION</scope>
</reference>
<reference key="7">
    <citation type="journal article" date="2012" name="Arterioscler. Thromb. Vasc. Biol.">
        <title>Alanine-Glyoxylate aminotransferase-2 metabolizes endogenous methylarginines, regulates NO, and controls blood pressure.</title>
        <authorList>
            <person name="Caplin B."/>
            <person name="Wang Z."/>
            <person name="Slaviero A."/>
            <person name="Tomlinson J."/>
            <person name="Dowsett L."/>
            <person name="Delahaye M."/>
            <person name="Salama A."/>
            <person name="Wheeler D.C."/>
            <person name="Leiper J."/>
        </authorList>
    </citation>
    <scope>FUNCTION</scope>
    <scope>CATALYTIC ACTIVITY</scope>
</reference>
<reference key="8">
    <citation type="journal article" date="2014" name="J. Proteomics">
        <title>An enzyme assisted RP-RPLC approach for in-depth analysis of human liver phosphoproteome.</title>
        <authorList>
            <person name="Bian Y."/>
            <person name="Song C."/>
            <person name="Cheng K."/>
            <person name="Dong M."/>
            <person name="Wang F."/>
            <person name="Huang J."/>
            <person name="Sun D."/>
            <person name="Wang L."/>
            <person name="Ye M."/>
            <person name="Zou H."/>
        </authorList>
    </citation>
    <scope>IDENTIFICATION BY MASS SPECTROMETRY [LARGE SCALE ANALYSIS]</scope>
    <source>
        <tissue>Liver</tissue>
    </source>
</reference>
<reference key="9">
    <citation type="journal article" date="2019" name="Atheroscler. Suppl.">
        <title>Kidney and liver are the main organs of expression of a key metabolic enzyme alanine:glyoxylate aminotransferase 2 in humans.</title>
        <authorList>
            <person name="Jarzebska N."/>
            <person name="Georgi S."/>
            <person name="Jabs N."/>
            <person name="Brilloff S."/>
            <person name="Maas R."/>
            <person name="Rodionov R.N."/>
            <person name="Zietz C."/>
            <person name="Montresor S."/>
            <person name="Hohenstein B."/>
            <person name="Weiss N."/>
        </authorList>
    </citation>
    <scope>SUBCELLULAR LOCATION</scope>
    <scope>TISSUE SPECIFICITY</scope>
</reference>
<reference key="10">
    <citation type="journal article" date="2014" name="J. Atheroscler. Thromb.">
        <title>Association of the AGXT2 V140I polymorphism with risk for coronary heart disease in a Chinese population.</title>
        <authorList>
            <person name="Zhou J.P."/>
            <person name="Bai Y.P."/>
            <person name="Hu X.L."/>
            <person name="Kuang D.B."/>
            <person name="Shi R.Z."/>
            <person name="Xiong Y."/>
            <person name="Zhang W."/>
            <person name="Xia J."/>
            <person name="Chen B.L."/>
            <person name="Yang T.L."/>
            <person name="Chen X.P."/>
        </authorList>
    </citation>
    <scope>VARIANT ILE-140</scope>
</reference>
<reference key="11">
    <citation type="journal article" date="2014" name="PLoS ONE">
        <title>Alanine-glyoxylate aminotransferase 2 (AGXT2) polymorphisms have considerable impact on methylarginine and beta-aminoisobutyrate metabolism in healthy volunteers.</title>
        <authorList>
            <person name="Kittel A."/>
            <person name="Muller F."/>
            <person name="Konig J."/>
            <person name="Mieth M."/>
            <person name="Sticht H."/>
            <person name="Zolk O."/>
            <person name="Kralj A."/>
            <person name="Heinrich M.R."/>
            <person name="Fromm M.F."/>
            <person name="Maas R."/>
        </authorList>
    </citation>
    <scope>POLYMORPHISM</scope>
    <scope>VARIANTS ILE-140 AND LEU-498</scope>
    <scope>FUNCTION</scope>
    <scope>SUBCELLULAR LOCATION</scope>
    <scope>CHARACTERIZATION OF VARIANT ILE-140</scope>
    <scope>CATALYTIC ACTIVITY</scope>
</reference>
<protein>
    <recommendedName>
        <fullName>Alanine--glyoxylate aminotransferase 2, mitochondrial</fullName>
        <shortName>AGT 2</shortName>
        <ecNumber evidence="3">2.6.1.44</ecNumber>
    </recommendedName>
    <alternativeName>
        <fullName>(R)-3-amino-2-methylpropionate--pyruvate transaminase</fullName>
        <ecNumber evidence="7">2.6.1.40</ecNumber>
    </alternativeName>
    <alternativeName>
        <fullName>Beta-ALAAT II</fullName>
    </alternativeName>
    <alternativeName>
        <fullName>Beta-alanine-pyruvate aminotransferase</fullName>
        <ecNumber evidence="3">2.6.1.18</ecNumber>
    </alternativeName>
    <alternativeName>
        <fullName evidence="3">D-3-aminoisobutyrate-pyruvate aminotransferase</fullName>
    </alternativeName>
    <alternativeName>
        <fullName evidence="3">D-AIBAT</fullName>
    </alternativeName>
    <alternativeName>
        <fullName evidence="3">D-beta-aminoisobutyrate-pyruvate aminotransferase</fullName>
    </alternativeName>
</protein>